<feature type="chain" id="PRO_0000099171" description="Viral late gene transcription factor 2">
    <location>
        <begin position="1"/>
        <end position="150"/>
    </location>
</feature>
<name>VLTF2_VACCC</name>
<proteinExistence type="evidence at transcript level"/>
<comment type="function">
    <text evidence="1">Acts with RNA polymerase to initiate transcription from late gene promoters.</text>
</comment>
<comment type="subunit">
    <text evidence="1">Interacts with itself. Interacts with the late transcription factors VLTF-1/OPG093.</text>
</comment>
<comment type="developmental stage">
    <text>Intermediate stages of infection.</text>
</comment>
<comment type="similarity">
    <text evidence="2">Belongs to the orthopoxvirus VLTF-2/OPG126 family.</text>
</comment>
<organism>
    <name type="scientific">Vaccinia virus (strain Copenhagen)</name>
    <name type="common">VACV</name>
    <dbReference type="NCBI Taxonomy" id="10249"/>
    <lineage>
        <taxon>Viruses</taxon>
        <taxon>Varidnaviria</taxon>
        <taxon>Bamfordvirae</taxon>
        <taxon>Nucleocytoviricota</taxon>
        <taxon>Pokkesviricetes</taxon>
        <taxon>Chitovirales</taxon>
        <taxon>Poxviridae</taxon>
        <taxon>Chordopoxvirinae</taxon>
        <taxon>Orthopoxvirus</taxon>
        <taxon>Vaccinia virus</taxon>
    </lineage>
</organism>
<organismHost>
    <name type="scientific">Homo sapiens</name>
    <name type="common">Human</name>
    <dbReference type="NCBI Taxonomy" id="9606"/>
</organismHost>
<sequence>MAKRVSLPDVVISAPKAVFKPAKEEALACILPKYYKSMADVSIKTNSVIDKCWFCNQDLVFRPISIETYKGGEVGYFCSKICRDSLASMVKSHVALREEPKISLLPLVFYEDKEKVINTINLLRDKDGVYGSCYFKENSQIIDISLRSLL</sequence>
<protein>
    <recommendedName>
        <fullName>Viral late gene transcription factor 2</fullName>
        <shortName>VLTF-2</shortName>
    </recommendedName>
    <alternativeName>
        <fullName>Trans-activator protein A1</fullName>
    </alternativeName>
</protein>
<evidence type="ECO:0000250" key="1">
    <source>
        <dbReference type="UniProtKB" id="P07610"/>
    </source>
</evidence>
<evidence type="ECO:0000305" key="2"/>
<keyword id="KW-0010">Activator</keyword>
<keyword id="KW-0426">Late protein</keyword>
<keyword id="KW-1185">Reference proteome</keyword>
<keyword id="KW-0804">Transcription</keyword>
<keyword id="KW-0805">Transcription regulation</keyword>
<gene>
    <name type="primary">OPG126</name>
    <name type="synonym">VLTF2</name>
    <name type="ORF">A1L</name>
</gene>
<reference key="1">
    <citation type="journal article" date="1990" name="Virology">
        <title>The complete DNA sequence of vaccinia virus.</title>
        <authorList>
            <person name="Goebel S.J."/>
            <person name="Johnson G.P."/>
            <person name="Perkus M.E."/>
            <person name="Davis S.W."/>
            <person name="Winslow J.P."/>
            <person name="Paoletti E."/>
        </authorList>
    </citation>
    <scope>NUCLEOTIDE SEQUENCE [LARGE SCALE GENOMIC DNA]</scope>
</reference>
<reference key="2">
    <citation type="journal article" date="1990" name="Virology">
        <title>Appendix to 'The complete DNA sequence of vaccinia virus'.</title>
        <authorList>
            <person name="Goebel S.J."/>
            <person name="Johnson G.P."/>
            <person name="Perkus M.E."/>
            <person name="Davis S.W."/>
            <person name="Winslow J.P."/>
            <person name="Paoletti E."/>
        </authorList>
    </citation>
    <scope>NUCLEOTIDE SEQUENCE [LARGE SCALE GENOMIC DNA]</scope>
</reference>
<dbReference type="EMBL" id="M35027">
    <property type="protein sequence ID" value="AAA48116.1"/>
    <property type="molecule type" value="Genomic_DNA"/>
</dbReference>
<dbReference type="PIR" id="C42517">
    <property type="entry name" value="C42517"/>
</dbReference>
<dbReference type="Proteomes" id="UP000008269">
    <property type="component" value="Segment"/>
</dbReference>
<dbReference type="GO" id="GO:0008270">
    <property type="term" value="F:zinc ion binding"/>
    <property type="evidence" value="ECO:0007669"/>
    <property type="project" value="InterPro"/>
</dbReference>
<dbReference type="InterPro" id="IPR004975">
    <property type="entry name" value="Poxvirus_VLTF2"/>
</dbReference>
<dbReference type="InterPro" id="IPR010507">
    <property type="entry name" value="Znf_MYM"/>
</dbReference>
<dbReference type="Pfam" id="PF03295">
    <property type="entry name" value="Pox_TAA1"/>
    <property type="match status" value="1"/>
</dbReference>
<dbReference type="Pfam" id="PF06467">
    <property type="entry name" value="zf-FCS"/>
    <property type="match status" value="1"/>
</dbReference>
<accession>P20982</accession>